<proteinExistence type="inferred from homology"/>
<sequence length="442" mass="46963">MYLPQEIIRKKRDGEVLTADEINFFIQGVANNTVSEGQIAAFAMTIFFNEMTMDERIALTCAMRDSGMVIDWSHMNFGGPIVDKHSTGGVGDVTSLMLGPMVAACGGFVPMISGRGLGHTGGTLDKLEAIPGYNITPTNEVFGQVTKDAGVAIIGQTGDLAPADKRVYATRDITATVDNISLITASILSKKLAAGLESLVMDVKVGSGAFMPTYEASEELAKSIVAVANGAGTKTTAILTDMNQVLASSAGNAVEVREAVRFLTGEYRNPRLLEVTMASCAEMLVLAKLAENTDDARAKLMEVLDNGKAAACFGKMVAGLGGPADFVENYDNYLEKAEIIKPVYATETGIVSAMDTRAIGMAVVSMGGGRRVATDEIDYAVGFDNFIRLGEVADSDKPLAVIHARSEGQWEEAAKALRSAIKVGGEYTPTPEVYRQIRAEDI</sequence>
<evidence type="ECO:0000255" key="1">
    <source>
        <dbReference type="HAMAP-Rule" id="MF_01628"/>
    </source>
</evidence>
<reference key="1">
    <citation type="journal article" date="2003" name="Lancet">
        <title>Genome sequence of Vibrio parahaemolyticus: a pathogenic mechanism distinct from that of V. cholerae.</title>
        <authorList>
            <person name="Makino K."/>
            <person name="Oshima K."/>
            <person name="Kurokawa K."/>
            <person name="Yokoyama K."/>
            <person name="Uda T."/>
            <person name="Tagomori K."/>
            <person name="Iijima Y."/>
            <person name="Najima M."/>
            <person name="Nakano M."/>
            <person name="Yamashita A."/>
            <person name="Kubota Y."/>
            <person name="Kimura S."/>
            <person name="Yasunaga T."/>
            <person name="Honda T."/>
            <person name="Shinagawa H."/>
            <person name="Hattori M."/>
            <person name="Iida T."/>
        </authorList>
    </citation>
    <scope>NUCLEOTIDE SEQUENCE [LARGE SCALE GENOMIC DNA]</scope>
    <source>
        <strain>RIMD 2210633</strain>
    </source>
</reference>
<comment type="function">
    <text evidence="1">The enzymes which catalyze the reversible phosphorolysis of pyrimidine nucleosides are involved in the degradation of these compounds and in their utilization as carbon and energy sources, or in the rescue of pyrimidine bases for nucleotide synthesis.</text>
</comment>
<comment type="catalytic activity">
    <reaction evidence="1">
        <text>thymidine + phosphate = 2-deoxy-alpha-D-ribose 1-phosphate + thymine</text>
        <dbReference type="Rhea" id="RHEA:16037"/>
        <dbReference type="ChEBI" id="CHEBI:17748"/>
        <dbReference type="ChEBI" id="CHEBI:17821"/>
        <dbReference type="ChEBI" id="CHEBI:43474"/>
        <dbReference type="ChEBI" id="CHEBI:57259"/>
        <dbReference type="EC" id="2.4.2.4"/>
    </reaction>
</comment>
<comment type="pathway">
    <text evidence="1">Pyrimidine metabolism; dTMP biosynthesis via salvage pathway; dTMP from thymine: step 1/2.</text>
</comment>
<comment type="subunit">
    <text evidence="1">Homodimer.</text>
</comment>
<comment type="similarity">
    <text evidence="1">Belongs to the thymidine/pyrimidine-nucleoside phosphorylase family.</text>
</comment>
<gene>
    <name evidence="1" type="primary">deoA</name>
    <name type="ordered locus">VP2435</name>
</gene>
<protein>
    <recommendedName>
        <fullName evidence="1">Thymidine phosphorylase</fullName>
        <ecNumber evidence="1">2.4.2.4</ecNumber>
    </recommendedName>
    <alternativeName>
        <fullName evidence="1">TdRPase</fullName>
    </alternativeName>
</protein>
<dbReference type="EC" id="2.4.2.4" evidence="1"/>
<dbReference type="EMBL" id="BA000031">
    <property type="protein sequence ID" value="BAC60698.1"/>
    <property type="molecule type" value="Genomic_DNA"/>
</dbReference>
<dbReference type="RefSeq" id="NP_798814.1">
    <property type="nucleotide sequence ID" value="NC_004603.1"/>
</dbReference>
<dbReference type="RefSeq" id="WP_005456100.1">
    <property type="nucleotide sequence ID" value="NC_004603.1"/>
</dbReference>
<dbReference type="SMR" id="Q87M23"/>
<dbReference type="GeneID" id="1189948"/>
<dbReference type="KEGG" id="vpa:VP2435"/>
<dbReference type="PATRIC" id="fig|223926.6.peg.2336"/>
<dbReference type="eggNOG" id="COG0213">
    <property type="taxonomic scope" value="Bacteria"/>
</dbReference>
<dbReference type="HOGENOM" id="CLU_025040_0_1_6"/>
<dbReference type="UniPathway" id="UPA00578">
    <property type="reaction ID" value="UER00638"/>
</dbReference>
<dbReference type="Proteomes" id="UP000002493">
    <property type="component" value="Chromosome 1"/>
</dbReference>
<dbReference type="GO" id="GO:0005829">
    <property type="term" value="C:cytosol"/>
    <property type="evidence" value="ECO:0007669"/>
    <property type="project" value="TreeGrafter"/>
</dbReference>
<dbReference type="GO" id="GO:0004645">
    <property type="term" value="F:1,4-alpha-oligoglucan phosphorylase activity"/>
    <property type="evidence" value="ECO:0007669"/>
    <property type="project" value="InterPro"/>
</dbReference>
<dbReference type="GO" id="GO:0009032">
    <property type="term" value="F:thymidine phosphorylase activity"/>
    <property type="evidence" value="ECO:0007669"/>
    <property type="project" value="UniProtKB-UniRule"/>
</dbReference>
<dbReference type="GO" id="GO:0006206">
    <property type="term" value="P:pyrimidine nucleobase metabolic process"/>
    <property type="evidence" value="ECO:0007669"/>
    <property type="project" value="InterPro"/>
</dbReference>
<dbReference type="GO" id="GO:0046104">
    <property type="term" value="P:thymidine metabolic process"/>
    <property type="evidence" value="ECO:0007669"/>
    <property type="project" value="UniProtKB-UniRule"/>
</dbReference>
<dbReference type="FunFam" id="3.40.1030.10:FF:000001">
    <property type="entry name" value="Thymidine phosphorylase"/>
    <property type="match status" value="1"/>
</dbReference>
<dbReference type="FunFam" id="3.90.1170.30:FF:000001">
    <property type="entry name" value="Thymidine phosphorylase"/>
    <property type="match status" value="1"/>
</dbReference>
<dbReference type="Gene3D" id="3.40.1030.10">
    <property type="entry name" value="Nucleoside phosphorylase/phosphoribosyltransferase catalytic domain"/>
    <property type="match status" value="1"/>
</dbReference>
<dbReference type="Gene3D" id="3.90.1170.30">
    <property type="entry name" value="Pyrimidine nucleoside phosphorylase-like, C-terminal domain"/>
    <property type="match status" value="1"/>
</dbReference>
<dbReference type="Gene3D" id="1.20.970.10">
    <property type="entry name" value="Transferase, Pyrimidine Nucleoside Phosphorylase, Chain C"/>
    <property type="match status" value="1"/>
</dbReference>
<dbReference type="HAMAP" id="MF_01628">
    <property type="entry name" value="Thymid_phosp"/>
    <property type="match status" value="1"/>
</dbReference>
<dbReference type="InterPro" id="IPR000312">
    <property type="entry name" value="Glycosyl_Trfase_fam3"/>
</dbReference>
<dbReference type="InterPro" id="IPR017459">
    <property type="entry name" value="Glycosyl_Trfase_fam3_N_dom"/>
</dbReference>
<dbReference type="InterPro" id="IPR036320">
    <property type="entry name" value="Glycosyl_Trfase_fam3_N_dom_sf"/>
</dbReference>
<dbReference type="InterPro" id="IPR035902">
    <property type="entry name" value="Nuc_phospho_transferase"/>
</dbReference>
<dbReference type="InterPro" id="IPR036566">
    <property type="entry name" value="PYNP-like_C_sf"/>
</dbReference>
<dbReference type="InterPro" id="IPR013102">
    <property type="entry name" value="PYNP_C"/>
</dbReference>
<dbReference type="InterPro" id="IPR018090">
    <property type="entry name" value="Pyrmidine_PPas_bac/euk"/>
</dbReference>
<dbReference type="InterPro" id="IPR017872">
    <property type="entry name" value="Pyrmidine_PPase_CS"/>
</dbReference>
<dbReference type="InterPro" id="IPR000053">
    <property type="entry name" value="Thymidine/pyrmidine_PPase"/>
</dbReference>
<dbReference type="InterPro" id="IPR013465">
    <property type="entry name" value="Thymidine_Pase"/>
</dbReference>
<dbReference type="NCBIfam" id="NF004490">
    <property type="entry name" value="PRK05820.1"/>
    <property type="match status" value="1"/>
</dbReference>
<dbReference type="NCBIfam" id="TIGR02643">
    <property type="entry name" value="T_phosphoryl"/>
    <property type="match status" value="1"/>
</dbReference>
<dbReference type="NCBIfam" id="TIGR02644">
    <property type="entry name" value="Y_phosphoryl"/>
    <property type="match status" value="1"/>
</dbReference>
<dbReference type="PANTHER" id="PTHR10515">
    <property type="entry name" value="THYMIDINE PHOSPHORYLASE"/>
    <property type="match status" value="1"/>
</dbReference>
<dbReference type="PANTHER" id="PTHR10515:SF0">
    <property type="entry name" value="THYMIDINE PHOSPHORYLASE"/>
    <property type="match status" value="1"/>
</dbReference>
<dbReference type="Pfam" id="PF02885">
    <property type="entry name" value="Glycos_trans_3N"/>
    <property type="match status" value="1"/>
</dbReference>
<dbReference type="Pfam" id="PF00591">
    <property type="entry name" value="Glycos_transf_3"/>
    <property type="match status" value="1"/>
</dbReference>
<dbReference type="Pfam" id="PF07831">
    <property type="entry name" value="PYNP_C"/>
    <property type="match status" value="1"/>
</dbReference>
<dbReference type="PIRSF" id="PIRSF000478">
    <property type="entry name" value="TP_PyNP"/>
    <property type="match status" value="1"/>
</dbReference>
<dbReference type="SMART" id="SM00941">
    <property type="entry name" value="PYNP_C"/>
    <property type="match status" value="1"/>
</dbReference>
<dbReference type="SUPFAM" id="SSF52418">
    <property type="entry name" value="Nucleoside phosphorylase/phosphoribosyltransferase catalytic domain"/>
    <property type="match status" value="1"/>
</dbReference>
<dbReference type="SUPFAM" id="SSF47648">
    <property type="entry name" value="Nucleoside phosphorylase/phosphoribosyltransferase N-terminal domain"/>
    <property type="match status" value="1"/>
</dbReference>
<dbReference type="SUPFAM" id="SSF54680">
    <property type="entry name" value="Pyrimidine nucleoside phosphorylase C-terminal domain"/>
    <property type="match status" value="1"/>
</dbReference>
<dbReference type="PROSITE" id="PS00647">
    <property type="entry name" value="THYMID_PHOSPHORYLASE"/>
    <property type="match status" value="1"/>
</dbReference>
<name>TYPH_VIBPA</name>
<keyword id="KW-0328">Glycosyltransferase</keyword>
<keyword id="KW-0808">Transferase</keyword>
<accession>Q87M23</accession>
<feature type="chain" id="PRO_0000059072" description="Thymidine phosphorylase">
    <location>
        <begin position="1"/>
        <end position="442"/>
    </location>
</feature>
<organism>
    <name type="scientific">Vibrio parahaemolyticus serotype O3:K6 (strain RIMD 2210633)</name>
    <dbReference type="NCBI Taxonomy" id="223926"/>
    <lineage>
        <taxon>Bacteria</taxon>
        <taxon>Pseudomonadati</taxon>
        <taxon>Pseudomonadota</taxon>
        <taxon>Gammaproteobacteria</taxon>
        <taxon>Vibrionales</taxon>
        <taxon>Vibrionaceae</taxon>
        <taxon>Vibrio</taxon>
    </lineage>
</organism>